<dbReference type="EMBL" id="U37690">
    <property type="protein sequence ID" value="AAA91459.1"/>
    <property type="molecule type" value="mRNA"/>
</dbReference>
<dbReference type="EMBL" id="CR536565">
    <property type="protein sequence ID" value="CAG38802.1"/>
    <property type="molecule type" value="mRNA"/>
</dbReference>
<dbReference type="EMBL" id="AK311997">
    <property type="protein sequence ID" value="BAG34935.1"/>
    <property type="molecule type" value="mRNA"/>
</dbReference>
<dbReference type="EMBL" id="BC005903">
    <property type="protein sequence ID" value="AAH05903.1"/>
    <property type="molecule type" value="mRNA"/>
</dbReference>
<dbReference type="EMBL" id="BC018649">
    <property type="protein sequence ID" value="AAH18649.1"/>
    <property type="molecule type" value="mRNA"/>
</dbReference>
<dbReference type="EMBL" id="Z47729">
    <property type="protein sequence ID" value="CAA87658.1"/>
    <property type="molecule type" value="Genomic_DNA"/>
</dbReference>
<dbReference type="EMBL" id="Z47728">
    <property type="protein sequence ID" value="CAA87657.1"/>
    <property type="molecule type" value="Genomic_DNA"/>
</dbReference>
<dbReference type="CCDS" id="CCDS7720.1"/>
<dbReference type="PIR" id="S53015">
    <property type="entry name" value="S53015"/>
</dbReference>
<dbReference type="RefSeq" id="NP_066951.1">
    <property type="nucleotide sequence ID" value="NM_021128.5"/>
</dbReference>
<dbReference type="PDB" id="5IY6">
    <property type="method" value="EM"/>
    <property type="resolution" value="7.20 A"/>
    <property type="chains" value="J=1-67"/>
</dbReference>
<dbReference type="PDB" id="5IY7">
    <property type="method" value="EM"/>
    <property type="resolution" value="8.60 A"/>
    <property type="chains" value="J=1-67"/>
</dbReference>
<dbReference type="PDB" id="5IY8">
    <property type="method" value="EM"/>
    <property type="resolution" value="7.90 A"/>
    <property type="chains" value="J=1-67"/>
</dbReference>
<dbReference type="PDB" id="5IY9">
    <property type="method" value="EM"/>
    <property type="resolution" value="6.30 A"/>
    <property type="chains" value="J=1-67"/>
</dbReference>
<dbReference type="PDB" id="5IYA">
    <property type="method" value="EM"/>
    <property type="resolution" value="5.40 A"/>
    <property type="chains" value="J=1-67"/>
</dbReference>
<dbReference type="PDB" id="5IYB">
    <property type="method" value="EM"/>
    <property type="resolution" value="3.90 A"/>
    <property type="chains" value="J=1-67"/>
</dbReference>
<dbReference type="PDB" id="5IYC">
    <property type="method" value="EM"/>
    <property type="resolution" value="3.90 A"/>
    <property type="chains" value="J=1-67"/>
</dbReference>
<dbReference type="PDB" id="5IYD">
    <property type="method" value="EM"/>
    <property type="resolution" value="3.90 A"/>
    <property type="chains" value="J=1-67"/>
</dbReference>
<dbReference type="PDB" id="6DRD">
    <property type="method" value="EM"/>
    <property type="resolution" value="3.90 A"/>
    <property type="chains" value="J=1-67"/>
</dbReference>
<dbReference type="PDB" id="6O9L">
    <property type="method" value="EM"/>
    <property type="resolution" value="7.20 A"/>
    <property type="chains" value="J=1-67"/>
</dbReference>
<dbReference type="PDB" id="6XRE">
    <property type="method" value="EM"/>
    <property type="resolution" value="4.60 A"/>
    <property type="chains" value="J=1-67"/>
</dbReference>
<dbReference type="PDB" id="7A6H">
    <property type="method" value="EM"/>
    <property type="resolution" value="3.30 A"/>
    <property type="chains" value="J=1-67"/>
</dbReference>
<dbReference type="PDB" id="7AE1">
    <property type="method" value="EM"/>
    <property type="resolution" value="2.80 A"/>
    <property type="chains" value="J=1-67"/>
</dbReference>
<dbReference type="PDB" id="7AE3">
    <property type="method" value="EM"/>
    <property type="resolution" value="3.10 A"/>
    <property type="chains" value="J=1-67"/>
</dbReference>
<dbReference type="PDB" id="7AEA">
    <property type="method" value="EM"/>
    <property type="resolution" value="3.40 A"/>
    <property type="chains" value="J=1-67"/>
</dbReference>
<dbReference type="PDB" id="7AST">
    <property type="method" value="EM"/>
    <property type="resolution" value="4.00 A"/>
    <property type="chains" value="B=1-67"/>
</dbReference>
<dbReference type="PDB" id="7D58">
    <property type="method" value="EM"/>
    <property type="resolution" value="2.90 A"/>
    <property type="chains" value="J=1-67"/>
</dbReference>
<dbReference type="PDB" id="7D59">
    <property type="method" value="EM"/>
    <property type="resolution" value="3.10 A"/>
    <property type="chains" value="J=1-67"/>
</dbReference>
<dbReference type="PDB" id="7DN3">
    <property type="method" value="EM"/>
    <property type="resolution" value="3.50 A"/>
    <property type="chains" value="J=1-67"/>
</dbReference>
<dbReference type="PDB" id="7DU2">
    <property type="method" value="EM"/>
    <property type="resolution" value="3.35 A"/>
    <property type="chains" value="J=1-67"/>
</dbReference>
<dbReference type="PDB" id="7FJI">
    <property type="method" value="EM"/>
    <property type="resolution" value="3.60 A"/>
    <property type="chains" value="J=1-67"/>
</dbReference>
<dbReference type="PDB" id="7FJJ">
    <property type="method" value="EM"/>
    <property type="resolution" value="3.60 A"/>
    <property type="chains" value="J=1-67"/>
</dbReference>
<dbReference type="PDB" id="7LBM">
    <property type="method" value="EM"/>
    <property type="resolution" value="4.80 A"/>
    <property type="chains" value="J=1-67"/>
</dbReference>
<dbReference type="PDB" id="7OB9">
    <property type="method" value="EM"/>
    <property type="resolution" value="2.70 A"/>
    <property type="chains" value="J=1-67"/>
</dbReference>
<dbReference type="PDB" id="7OBA">
    <property type="method" value="EM"/>
    <property type="resolution" value="3.10 A"/>
    <property type="chains" value="J=1-67"/>
</dbReference>
<dbReference type="PDB" id="7OBB">
    <property type="method" value="EM"/>
    <property type="resolution" value="3.30 A"/>
    <property type="chains" value="J=1-67"/>
</dbReference>
<dbReference type="PDB" id="7VBA">
    <property type="method" value="EM"/>
    <property type="resolution" value="2.89 A"/>
    <property type="chains" value="J=1-67"/>
</dbReference>
<dbReference type="PDB" id="7VBB">
    <property type="method" value="EM"/>
    <property type="resolution" value="2.81 A"/>
    <property type="chains" value="J=1-67"/>
</dbReference>
<dbReference type="PDB" id="7VBC">
    <property type="method" value="EM"/>
    <property type="resolution" value="3.01 A"/>
    <property type="chains" value="J=1-67"/>
</dbReference>
<dbReference type="PDB" id="8A43">
    <property type="method" value="EM"/>
    <property type="resolution" value="4.09 A"/>
    <property type="chains" value="J=1-67"/>
</dbReference>
<dbReference type="PDB" id="8ITY">
    <property type="method" value="EM"/>
    <property type="resolution" value="3.90 A"/>
    <property type="chains" value="J=1-67"/>
</dbReference>
<dbReference type="PDB" id="8IUE">
    <property type="method" value="EM"/>
    <property type="resolution" value="4.10 A"/>
    <property type="chains" value="J=1-67"/>
</dbReference>
<dbReference type="PDB" id="8IUH">
    <property type="method" value="EM"/>
    <property type="resolution" value="3.40 A"/>
    <property type="chains" value="J=1-67"/>
</dbReference>
<dbReference type="PDB" id="9EHZ">
    <property type="method" value="EM"/>
    <property type="resolution" value="2.60 A"/>
    <property type="chains" value="J=1-67"/>
</dbReference>
<dbReference type="PDB" id="9EI1">
    <property type="method" value="EM"/>
    <property type="resolution" value="3.20 A"/>
    <property type="chains" value="J=1-67"/>
</dbReference>
<dbReference type="PDB" id="9EI3">
    <property type="method" value="EM"/>
    <property type="resolution" value="3.20 A"/>
    <property type="chains" value="J=1-67"/>
</dbReference>
<dbReference type="PDB" id="9EI4">
    <property type="method" value="EM"/>
    <property type="resolution" value="3.70 A"/>
    <property type="chains" value="J=1-67"/>
</dbReference>
<dbReference type="PDB" id="9FSO">
    <property type="method" value="EM"/>
    <property type="resolution" value="3.28 A"/>
    <property type="chains" value="Q=1-67"/>
</dbReference>
<dbReference type="PDB" id="9FSP">
    <property type="method" value="EM"/>
    <property type="resolution" value="3.39 A"/>
    <property type="chains" value="Q=1-67"/>
</dbReference>
<dbReference type="PDB" id="9FSQ">
    <property type="method" value="EM"/>
    <property type="resolution" value="3.51 A"/>
    <property type="chains" value="Q=1-67"/>
</dbReference>
<dbReference type="PDB" id="9FSR">
    <property type="method" value="EM"/>
    <property type="resolution" value="3.76 A"/>
    <property type="chains" value="Q=1-67"/>
</dbReference>
<dbReference type="PDB" id="9FSS">
    <property type="method" value="EM"/>
    <property type="resolution" value="4.14 A"/>
    <property type="chains" value="Q=1-67"/>
</dbReference>
<dbReference type="PDBsum" id="5IY6"/>
<dbReference type="PDBsum" id="5IY7"/>
<dbReference type="PDBsum" id="5IY8"/>
<dbReference type="PDBsum" id="5IY9"/>
<dbReference type="PDBsum" id="5IYA"/>
<dbReference type="PDBsum" id="5IYB"/>
<dbReference type="PDBsum" id="5IYC"/>
<dbReference type="PDBsum" id="5IYD"/>
<dbReference type="PDBsum" id="6DRD"/>
<dbReference type="PDBsum" id="6O9L"/>
<dbReference type="PDBsum" id="6XRE"/>
<dbReference type="PDBsum" id="7A6H"/>
<dbReference type="PDBsum" id="7AE1"/>
<dbReference type="PDBsum" id="7AE3"/>
<dbReference type="PDBsum" id="7AEA"/>
<dbReference type="PDBsum" id="7AST"/>
<dbReference type="PDBsum" id="7D58"/>
<dbReference type="PDBsum" id="7D59"/>
<dbReference type="PDBsum" id="7DN3"/>
<dbReference type="PDBsum" id="7DU2"/>
<dbReference type="PDBsum" id="7FJI"/>
<dbReference type="PDBsum" id="7FJJ"/>
<dbReference type="PDBsum" id="7LBM"/>
<dbReference type="PDBsum" id="7OB9"/>
<dbReference type="PDBsum" id="7OBA"/>
<dbReference type="PDBsum" id="7OBB"/>
<dbReference type="PDBsum" id="7VBA"/>
<dbReference type="PDBsum" id="7VBB"/>
<dbReference type="PDBsum" id="7VBC"/>
<dbReference type="PDBsum" id="8A43"/>
<dbReference type="PDBsum" id="8ITY"/>
<dbReference type="PDBsum" id="8IUE"/>
<dbReference type="PDBsum" id="8IUH"/>
<dbReference type="PDBsum" id="9EHZ"/>
<dbReference type="PDBsum" id="9EI1"/>
<dbReference type="PDBsum" id="9EI3"/>
<dbReference type="PDBsum" id="9EI4"/>
<dbReference type="PDBsum" id="9FSO"/>
<dbReference type="PDBsum" id="9FSP"/>
<dbReference type="PDBsum" id="9FSQ"/>
<dbReference type="PDBsum" id="9FSR"/>
<dbReference type="PDBsum" id="9FSS"/>
<dbReference type="EMDB" id="EMD-11673"/>
<dbReference type="EMDB" id="EMD-11736"/>
<dbReference type="EMDB" id="EMD-11738"/>
<dbReference type="EMDB" id="EMD-11742"/>
<dbReference type="EMDB" id="EMD-11904"/>
<dbReference type="EMDB" id="EMD-12795"/>
<dbReference type="EMDB" id="EMD-12796"/>
<dbReference type="EMDB" id="EMD-12797"/>
<dbReference type="EMDB" id="EMD-15135"/>
<dbReference type="EMDB" id="EMD-16828"/>
<dbReference type="EMDB" id="EMD-16832"/>
<dbReference type="EMDB" id="EMD-16833"/>
<dbReference type="EMDB" id="EMD-22294"/>
<dbReference type="EMDB" id="EMD-23255"/>
<dbReference type="EMDB" id="EMD-30577"/>
<dbReference type="EMDB" id="EMD-30578"/>
<dbReference type="EMDB" id="EMD-30779"/>
<dbReference type="EMDB" id="EMD-30865"/>
<dbReference type="EMDB" id="EMD-31621"/>
<dbReference type="EMDB" id="EMD-31622"/>
<dbReference type="EMDB" id="EMD-31876"/>
<dbReference type="EMDB" id="EMD-31877"/>
<dbReference type="EMDB" id="EMD-31878"/>
<dbReference type="EMDB" id="EMD-35712"/>
<dbReference type="EMDB" id="EMD-35719"/>
<dbReference type="EMDB" id="EMD-35722"/>
<dbReference type="EMDB" id="EMD-48071"/>
<dbReference type="EMDB" id="EMD-48073"/>
<dbReference type="EMDB" id="EMD-48075"/>
<dbReference type="EMDB" id="EMD-48076"/>
<dbReference type="EMDB" id="EMD-50730"/>
<dbReference type="EMDB" id="EMD-50731"/>
<dbReference type="EMDB" id="EMD-50732"/>
<dbReference type="EMDB" id="EMD-50733"/>
<dbReference type="EMDB" id="EMD-50734"/>
<dbReference type="EMDB" id="EMD-7997"/>
<dbReference type="EMDB" id="EMD-8132"/>
<dbReference type="EMDB" id="EMD-8133"/>
<dbReference type="EMDB" id="EMD-8134"/>
<dbReference type="EMDB" id="EMD-8135"/>
<dbReference type="EMDB" id="EMD-8136"/>
<dbReference type="EMDB" id="EMD-8137"/>
<dbReference type="EMDB" id="EMD-8138"/>
<dbReference type="SMR" id="P62875"/>
<dbReference type="BioGRID" id="111437">
    <property type="interactions" value="178"/>
</dbReference>
<dbReference type="ComplexPortal" id="CPX-2386">
    <property type="entry name" value="DNA-directed RNA polymerase I complex"/>
</dbReference>
<dbReference type="ComplexPortal" id="CPX-2387">
    <property type="entry name" value="DNA-directed RNA polymerase II complex, Pol II(G) variant"/>
</dbReference>
<dbReference type="ComplexPortal" id="CPX-2393">
    <property type="entry name" value="DNA-directed RNA polymerase III complex, POLR3G variant"/>
</dbReference>
<dbReference type="ComplexPortal" id="CPX-7481">
    <property type="entry name" value="DNA-directed RNA polymerase II complex"/>
</dbReference>
<dbReference type="ComplexPortal" id="CPX-7482">
    <property type="entry name" value="DNA-directed RNA polymerase III complex, POLR3GL variant"/>
</dbReference>
<dbReference type="CORUM" id="P62875"/>
<dbReference type="DIP" id="DIP-32960N"/>
<dbReference type="FunCoup" id="P62875">
    <property type="interactions" value="1809"/>
</dbReference>
<dbReference type="IntAct" id="P62875">
    <property type="interactions" value="120"/>
</dbReference>
<dbReference type="MINT" id="P62875"/>
<dbReference type="STRING" id="9606.ENSP00000324124"/>
<dbReference type="iPTMnet" id="P62875"/>
<dbReference type="PhosphoSitePlus" id="P62875"/>
<dbReference type="SwissPalm" id="P62875"/>
<dbReference type="BioMuta" id="POLR2L"/>
<dbReference type="DMDM" id="51338657"/>
<dbReference type="jPOST" id="P62875"/>
<dbReference type="MassIVE" id="P62875"/>
<dbReference type="PaxDb" id="9606-ENSP00000324124"/>
<dbReference type="PeptideAtlas" id="P62875"/>
<dbReference type="ProteomicsDB" id="57442"/>
<dbReference type="Pumba" id="P62875"/>
<dbReference type="TopDownProteomics" id="P62875"/>
<dbReference type="Antibodypedia" id="22712">
    <property type="antibodies" value="110 antibodies from 22 providers"/>
</dbReference>
<dbReference type="DNASU" id="5441"/>
<dbReference type="Ensembl" id="ENST00000322028.5">
    <property type="protein sequence ID" value="ENSP00000324124.4"/>
    <property type="gene ID" value="ENSG00000177700.6"/>
</dbReference>
<dbReference type="Ensembl" id="ENST00000534030.1">
    <property type="protein sequence ID" value="ENSP00000432807.1"/>
    <property type="gene ID" value="ENSG00000177700.6"/>
</dbReference>
<dbReference type="GeneID" id="5441"/>
<dbReference type="KEGG" id="hsa:5441"/>
<dbReference type="MANE-Select" id="ENST00000322028.5">
    <property type="protein sequence ID" value="ENSP00000324124.4"/>
    <property type="RefSeq nucleotide sequence ID" value="NM_021128.5"/>
    <property type="RefSeq protein sequence ID" value="NP_066951.1"/>
</dbReference>
<dbReference type="UCSC" id="uc001lsc.4">
    <property type="organism name" value="human"/>
</dbReference>
<dbReference type="AGR" id="HGNC:9199"/>
<dbReference type="CTD" id="5441"/>
<dbReference type="DisGeNET" id="5441"/>
<dbReference type="GeneCards" id="POLR2L"/>
<dbReference type="HGNC" id="HGNC:9199">
    <property type="gene designation" value="POLR2L"/>
</dbReference>
<dbReference type="HPA" id="ENSG00000177700">
    <property type="expression patterns" value="Low tissue specificity"/>
</dbReference>
<dbReference type="MIM" id="601189">
    <property type="type" value="gene"/>
</dbReference>
<dbReference type="neXtProt" id="NX_P62875"/>
<dbReference type="OpenTargets" id="ENSG00000177700"/>
<dbReference type="PharmGKB" id="PA33519"/>
<dbReference type="VEuPathDB" id="HostDB:ENSG00000177700"/>
<dbReference type="eggNOG" id="KOG3497">
    <property type="taxonomic scope" value="Eukaryota"/>
</dbReference>
<dbReference type="GeneTree" id="ENSGT00390000007087"/>
<dbReference type="HOGENOM" id="CLU_143122_1_1_1"/>
<dbReference type="InParanoid" id="P62875"/>
<dbReference type="OMA" id="YCCRRMF"/>
<dbReference type="OrthoDB" id="10258858at2759"/>
<dbReference type="PAN-GO" id="P62875">
    <property type="GO annotations" value="8 GO annotations based on evolutionary models"/>
</dbReference>
<dbReference type="PhylomeDB" id="P62875"/>
<dbReference type="TreeFam" id="TF103046"/>
<dbReference type="PathwayCommons" id="P62875"/>
<dbReference type="Reactome" id="R-HSA-112382">
    <property type="pathway name" value="Formation of RNA Pol II elongation complex"/>
</dbReference>
<dbReference type="Reactome" id="R-HSA-113418">
    <property type="pathway name" value="Formation of the Early Elongation Complex"/>
</dbReference>
<dbReference type="Reactome" id="R-HSA-167152">
    <property type="pathway name" value="Formation of HIV elongation complex in the absence of HIV Tat"/>
</dbReference>
<dbReference type="Reactome" id="R-HSA-167158">
    <property type="pathway name" value="Formation of the HIV-1 Early Elongation Complex"/>
</dbReference>
<dbReference type="Reactome" id="R-HSA-167160">
    <property type="pathway name" value="RNA Pol II CTD phosphorylation and interaction with CE during HIV infection"/>
</dbReference>
<dbReference type="Reactome" id="R-HSA-167161">
    <property type="pathway name" value="HIV Transcription Initiation"/>
</dbReference>
<dbReference type="Reactome" id="R-HSA-167162">
    <property type="pathway name" value="RNA Polymerase II HIV Promoter Escape"/>
</dbReference>
<dbReference type="Reactome" id="R-HSA-167172">
    <property type="pathway name" value="Transcription of the HIV genome"/>
</dbReference>
<dbReference type="Reactome" id="R-HSA-167200">
    <property type="pathway name" value="Formation of HIV-1 elongation complex containing HIV-1 Tat"/>
</dbReference>
<dbReference type="Reactome" id="R-HSA-167238">
    <property type="pathway name" value="Pausing and recovery of Tat-mediated HIV elongation"/>
</dbReference>
<dbReference type="Reactome" id="R-HSA-167242">
    <property type="pathway name" value="Abortive elongation of HIV-1 transcript in the absence of Tat"/>
</dbReference>
<dbReference type="Reactome" id="R-HSA-167243">
    <property type="pathway name" value="Tat-mediated HIV elongation arrest and recovery"/>
</dbReference>
<dbReference type="Reactome" id="R-HSA-167246">
    <property type="pathway name" value="Tat-mediated elongation of the HIV-1 transcript"/>
</dbReference>
<dbReference type="Reactome" id="R-HSA-167287">
    <property type="pathway name" value="HIV elongation arrest and recovery"/>
</dbReference>
<dbReference type="Reactome" id="R-HSA-167290">
    <property type="pathway name" value="Pausing and recovery of HIV elongation"/>
</dbReference>
<dbReference type="Reactome" id="R-HSA-168325">
    <property type="pathway name" value="Viral Messenger RNA Synthesis"/>
</dbReference>
<dbReference type="Reactome" id="R-HSA-1834949">
    <property type="pathway name" value="Cytosolic sensors of pathogen-associated DNA"/>
</dbReference>
<dbReference type="Reactome" id="R-HSA-203927">
    <property type="pathway name" value="MicroRNA (miRNA) biogenesis"/>
</dbReference>
<dbReference type="Reactome" id="R-HSA-427413">
    <property type="pathway name" value="NoRC negatively regulates rRNA expression"/>
</dbReference>
<dbReference type="Reactome" id="R-HSA-5250924">
    <property type="pathway name" value="B-WICH complex positively regulates rRNA expression"/>
</dbReference>
<dbReference type="Reactome" id="R-HSA-5578749">
    <property type="pathway name" value="Transcriptional regulation by small RNAs"/>
</dbReference>
<dbReference type="Reactome" id="R-HSA-5601884">
    <property type="pathway name" value="PIWI-interacting RNA (piRNA) biogenesis"/>
</dbReference>
<dbReference type="Reactome" id="R-HSA-5617472">
    <property type="pathway name" value="Activation of anterior HOX genes in hindbrain development during early embryogenesis"/>
</dbReference>
<dbReference type="Reactome" id="R-HSA-674695">
    <property type="pathway name" value="RNA Polymerase II Pre-transcription Events"/>
</dbReference>
<dbReference type="Reactome" id="R-HSA-6781823">
    <property type="pathway name" value="Formation of TC-NER Pre-Incision Complex"/>
</dbReference>
<dbReference type="Reactome" id="R-HSA-6781827">
    <property type="pathway name" value="Transcription-Coupled Nucleotide Excision Repair (TC-NER)"/>
</dbReference>
<dbReference type="Reactome" id="R-HSA-6782135">
    <property type="pathway name" value="Dual incision in TC-NER"/>
</dbReference>
<dbReference type="Reactome" id="R-HSA-6782210">
    <property type="pathway name" value="Gap-filling DNA repair synthesis and ligation in TC-NER"/>
</dbReference>
<dbReference type="Reactome" id="R-HSA-6796648">
    <property type="pathway name" value="TP53 Regulates Transcription of DNA Repair Genes"/>
</dbReference>
<dbReference type="Reactome" id="R-HSA-6803529">
    <property type="pathway name" value="FGFR2 alternative splicing"/>
</dbReference>
<dbReference type="Reactome" id="R-HSA-6807505">
    <property type="pathway name" value="RNA polymerase II transcribes snRNA genes"/>
</dbReference>
<dbReference type="Reactome" id="R-HSA-72086">
    <property type="pathway name" value="mRNA Capping"/>
</dbReference>
<dbReference type="Reactome" id="R-HSA-72163">
    <property type="pathway name" value="mRNA Splicing - Major Pathway"/>
</dbReference>
<dbReference type="Reactome" id="R-HSA-72165">
    <property type="pathway name" value="mRNA Splicing - Minor Pathway"/>
</dbReference>
<dbReference type="Reactome" id="R-HSA-72203">
    <property type="pathway name" value="Processing of Capped Intron-Containing Pre-mRNA"/>
</dbReference>
<dbReference type="Reactome" id="R-HSA-73762">
    <property type="pathway name" value="RNA Polymerase I Transcription Initiation"/>
</dbReference>
<dbReference type="Reactome" id="R-HSA-73772">
    <property type="pathway name" value="RNA Polymerase I Promoter Escape"/>
</dbReference>
<dbReference type="Reactome" id="R-HSA-73776">
    <property type="pathway name" value="RNA Polymerase II Promoter Escape"/>
</dbReference>
<dbReference type="Reactome" id="R-HSA-73779">
    <property type="pathway name" value="RNA Polymerase II Transcription Pre-Initiation And Promoter Opening"/>
</dbReference>
<dbReference type="Reactome" id="R-HSA-73780">
    <property type="pathway name" value="RNA Polymerase III Chain Elongation"/>
</dbReference>
<dbReference type="Reactome" id="R-HSA-73863">
    <property type="pathway name" value="RNA Polymerase I Transcription Termination"/>
</dbReference>
<dbReference type="Reactome" id="R-HSA-73980">
    <property type="pathway name" value="RNA Polymerase III Transcription Termination"/>
</dbReference>
<dbReference type="Reactome" id="R-HSA-749476">
    <property type="pathway name" value="RNA Polymerase III Abortive And Retractive Initiation"/>
</dbReference>
<dbReference type="Reactome" id="R-HSA-75953">
    <property type="pathway name" value="RNA Polymerase II Transcription Initiation"/>
</dbReference>
<dbReference type="Reactome" id="R-HSA-75955">
    <property type="pathway name" value="RNA Polymerase II Transcription Elongation"/>
</dbReference>
<dbReference type="Reactome" id="R-HSA-76042">
    <property type="pathway name" value="RNA Polymerase II Transcription Initiation And Promoter Clearance"/>
</dbReference>
<dbReference type="Reactome" id="R-HSA-76061">
    <property type="pathway name" value="RNA Polymerase III Transcription Initiation From Type 1 Promoter"/>
</dbReference>
<dbReference type="Reactome" id="R-HSA-76066">
    <property type="pathway name" value="RNA Polymerase III Transcription Initiation From Type 2 Promoter"/>
</dbReference>
<dbReference type="Reactome" id="R-HSA-76071">
    <property type="pathway name" value="RNA Polymerase III Transcription Initiation From Type 3 Promoter"/>
</dbReference>
<dbReference type="Reactome" id="R-HSA-77075">
    <property type="pathway name" value="RNA Pol II CTD phosphorylation and interaction with CE"/>
</dbReference>
<dbReference type="Reactome" id="R-HSA-8851708">
    <property type="pathway name" value="Signaling by FGFR2 IIIa TM"/>
</dbReference>
<dbReference type="Reactome" id="R-HSA-9018519">
    <property type="pathway name" value="Estrogen-dependent gene expression"/>
</dbReference>
<dbReference type="Reactome" id="R-HSA-9670095">
    <property type="pathway name" value="Inhibition of DNA recombination at telomere"/>
</dbReference>
<dbReference type="SignaLink" id="P62875"/>
<dbReference type="SIGNOR" id="P62875"/>
<dbReference type="BioGRID-ORCS" id="5441">
    <property type="hits" value="847 hits in 1154 CRISPR screens"/>
</dbReference>
<dbReference type="CD-CODE" id="91857CE7">
    <property type="entry name" value="Nucleolus"/>
</dbReference>
<dbReference type="ChiTaRS" id="POLR2L">
    <property type="organism name" value="human"/>
</dbReference>
<dbReference type="EvolutionaryTrace" id="P62875"/>
<dbReference type="GeneWiki" id="POLR2L"/>
<dbReference type="GenomeRNAi" id="5441"/>
<dbReference type="Pharos" id="P62875">
    <property type="development level" value="Tbio"/>
</dbReference>
<dbReference type="PRO" id="PR:P62875"/>
<dbReference type="Proteomes" id="UP000005640">
    <property type="component" value="Chromosome 11"/>
</dbReference>
<dbReference type="RNAct" id="P62875">
    <property type="molecule type" value="protein"/>
</dbReference>
<dbReference type="Bgee" id="ENSG00000177700">
    <property type="expression patterns" value="Expressed in apex of heart and 213 other cell types or tissues"/>
</dbReference>
<dbReference type="GO" id="GO:0005829">
    <property type="term" value="C:cytosol"/>
    <property type="evidence" value="ECO:0000304"/>
    <property type="project" value="Reactome"/>
</dbReference>
<dbReference type="GO" id="GO:0005654">
    <property type="term" value="C:nucleoplasm"/>
    <property type="evidence" value="ECO:0000314"/>
    <property type="project" value="HPA"/>
</dbReference>
<dbReference type="GO" id="GO:0005634">
    <property type="term" value="C:nucleus"/>
    <property type="evidence" value="ECO:0000314"/>
    <property type="project" value="UniProtKB"/>
</dbReference>
<dbReference type="GO" id="GO:0005736">
    <property type="term" value="C:RNA polymerase I complex"/>
    <property type="evidence" value="ECO:0000314"/>
    <property type="project" value="UniProtKB"/>
</dbReference>
<dbReference type="GO" id="GO:0005665">
    <property type="term" value="C:RNA polymerase II, core complex"/>
    <property type="evidence" value="ECO:0000314"/>
    <property type="project" value="UniProtKB"/>
</dbReference>
<dbReference type="GO" id="GO:0005666">
    <property type="term" value="C:RNA polymerase III complex"/>
    <property type="evidence" value="ECO:0000314"/>
    <property type="project" value="UniProtKB"/>
</dbReference>
<dbReference type="GO" id="GO:0003677">
    <property type="term" value="F:DNA binding"/>
    <property type="evidence" value="ECO:0007669"/>
    <property type="project" value="InterPro"/>
</dbReference>
<dbReference type="GO" id="GO:0003899">
    <property type="term" value="F:DNA-directed RNA polymerase activity"/>
    <property type="evidence" value="ECO:0000304"/>
    <property type="project" value="ProtInc"/>
</dbReference>
<dbReference type="GO" id="GO:0008270">
    <property type="term" value="F:zinc ion binding"/>
    <property type="evidence" value="ECO:0000314"/>
    <property type="project" value="UniProtKB"/>
</dbReference>
<dbReference type="GO" id="GO:0006356">
    <property type="term" value="P:regulation of transcription by RNA polymerase I"/>
    <property type="evidence" value="ECO:0000304"/>
    <property type="project" value="ProtInc"/>
</dbReference>
<dbReference type="GO" id="GO:0006360">
    <property type="term" value="P:transcription by RNA polymerase I"/>
    <property type="evidence" value="ECO:0000318"/>
    <property type="project" value="GO_Central"/>
</dbReference>
<dbReference type="GO" id="GO:0006366">
    <property type="term" value="P:transcription by RNA polymerase II"/>
    <property type="evidence" value="ECO:0000314"/>
    <property type="project" value="UniProtKB"/>
</dbReference>
<dbReference type="GO" id="GO:0042797">
    <property type="term" value="P:tRNA transcription by RNA polymerase III"/>
    <property type="evidence" value="ECO:0000318"/>
    <property type="project" value="GO_Central"/>
</dbReference>
<dbReference type="FunFam" id="1.10.10.60:FF:000024">
    <property type="entry name" value="DNA-directed RNA polymerases I, II, and III subunit"/>
    <property type="match status" value="1"/>
</dbReference>
<dbReference type="Gene3D" id="1.10.10.60">
    <property type="entry name" value="Homeodomain-like"/>
    <property type="match status" value="1"/>
</dbReference>
<dbReference type="HAMAP" id="MF_00250">
    <property type="entry name" value="RNApol_arch_Rpo10"/>
    <property type="match status" value="1"/>
</dbReference>
<dbReference type="InterPro" id="IPR023580">
    <property type="entry name" value="RNA_pol_su_RPB10"/>
</dbReference>
<dbReference type="InterPro" id="IPR020789">
    <property type="entry name" value="RNA_pol_suN_Zn-BS"/>
</dbReference>
<dbReference type="InterPro" id="IPR000268">
    <property type="entry name" value="RPABC5/Rpb10"/>
</dbReference>
<dbReference type="NCBIfam" id="NF003089">
    <property type="entry name" value="PRK04016.1"/>
    <property type="match status" value="1"/>
</dbReference>
<dbReference type="PANTHER" id="PTHR23431:SF11">
    <property type="entry name" value="DNA-DIRECTED RNA POLYMERASES I, II, AND III SUBUNIT RPABC5"/>
    <property type="match status" value="1"/>
</dbReference>
<dbReference type="PANTHER" id="PTHR23431">
    <property type="entry name" value="DNA-DIRECTED RNA POLYMERASES I, II, AND III SUBUNIT RPABC5 FAMILY MEMBER"/>
    <property type="match status" value="1"/>
</dbReference>
<dbReference type="Pfam" id="PF01194">
    <property type="entry name" value="RNA_pol_N"/>
    <property type="match status" value="1"/>
</dbReference>
<dbReference type="PIRSF" id="PIRSF005653">
    <property type="entry name" value="RNA_pol_N/8_sub"/>
    <property type="match status" value="1"/>
</dbReference>
<dbReference type="SUPFAM" id="SSF46924">
    <property type="entry name" value="RNA polymerase subunit RPB10"/>
    <property type="match status" value="1"/>
</dbReference>
<dbReference type="PROSITE" id="PS01112">
    <property type="entry name" value="RNA_POL_N_8KD"/>
    <property type="match status" value="1"/>
</dbReference>
<sequence length="67" mass="7645">MIIPVRCFTCGKIVGNKWEAYLGLLQAEYTEGDALDALGLKRYCCRRMLLAHVDLIEKLLNYAPLEK</sequence>
<accession>P62875</accession>
<accession>P52436</accession>
<accession>Q6FHX3</accession>
<evidence type="ECO:0000250" key="1"/>
<evidence type="ECO:0000250" key="2">
    <source>
        <dbReference type="UniProtKB" id="P22139"/>
    </source>
</evidence>
<evidence type="ECO:0000269" key="3">
    <source>
    </source>
</evidence>
<evidence type="ECO:0000269" key="4">
    <source>
    </source>
</evidence>
<evidence type="ECO:0000269" key="5">
    <source>
    </source>
</evidence>
<evidence type="ECO:0000269" key="6">
    <source>
    </source>
</evidence>
<evidence type="ECO:0000269" key="7">
    <source>
    </source>
</evidence>
<evidence type="ECO:0000269" key="8">
    <source>
    </source>
</evidence>
<evidence type="ECO:0000269" key="9">
    <source>
    </source>
</evidence>
<evidence type="ECO:0000269" key="10">
    <source>
    </source>
</evidence>
<evidence type="ECO:0000269" key="11">
    <source>
    </source>
</evidence>
<evidence type="ECO:0000269" key="12">
    <source>
    </source>
</evidence>
<evidence type="ECO:0000269" key="13">
    <source>
    </source>
</evidence>
<evidence type="ECO:0000269" key="14">
    <source>
    </source>
</evidence>
<evidence type="ECO:0000269" key="15">
    <source>
    </source>
</evidence>
<evidence type="ECO:0000305" key="16"/>
<evidence type="ECO:0000305" key="17">
    <source>
    </source>
</evidence>
<evidence type="ECO:0000305" key="18">
    <source>
    </source>
</evidence>
<evidence type="ECO:0000312" key="19">
    <source>
        <dbReference type="HGNC" id="HGNC:9199"/>
    </source>
</evidence>
<evidence type="ECO:0007744" key="20">
    <source>
        <dbReference type="PDB" id="5IY6"/>
    </source>
</evidence>
<evidence type="ECO:0007744" key="21">
    <source>
        <dbReference type="PDB" id="7AE1"/>
    </source>
</evidence>
<evidence type="ECO:0007744" key="22">
    <source>
        <dbReference type="PDB" id="7D58"/>
    </source>
</evidence>
<evidence type="ECO:0007744" key="23">
    <source>
        <dbReference type="PDB" id="7DN3"/>
    </source>
</evidence>
<evidence type="ECO:0007829" key="24">
    <source>
        <dbReference type="PDB" id="7OB9"/>
    </source>
</evidence>
<name>RPAB5_HUMAN</name>
<proteinExistence type="evidence at protein level"/>
<feature type="chain" id="PRO_0000121333" description="DNA-directed RNA polymerases I, II, and III subunit RPABC5">
    <location>
        <begin position="1"/>
        <end position="67"/>
    </location>
</feature>
<feature type="binding site" evidence="5 8 9 10 20 21 22 23">
    <location>
        <position position="7"/>
    </location>
    <ligand>
        <name>Zn(2+)</name>
        <dbReference type="ChEBI" id="CHEBI:29105"/>
    </ligand>
</feature>
<feature type="binding site" evidence="5 8 9 10 20 21 22 23">
    <location>
        <position position="10"/>
    </location>
    <ligand>
        <name>Zn(2+)</name>
        <dbReference type="ChEBI" id="CHEBI:29105"/>
    </ligand>
</feature>
<feature type="binding site" evidence="5 8 9 10 20 21 22 23">
    <location>
        <position position="44"/>
    </location>
    <ligand>
        <name>Zn(2+)</name>
        <dbReference type="ChEBI" id="CHEBI:29105"/>
    </ligand>
</feature>
<feature type="binding site" evidence="5 8 10 20 21 23">
    <location>
        <position position="45"/>
    </location>
    <ligand>
        <name>Zn(2+)</name>
        <dbReference type="ChEBI" id="CHEBI:29105"/>
    </ligand>
</feature>
<feature type="strand" evidence="24">
    <location>
        <begin position="8"/>
        <end position="10"/>
    </location>
</feature>
<feature type="helix" evidence="24">
    <location>
        <begin position="15"/>
        <end position="17"/>
    </location>
</feature>
<feature type="helix" evidence="24">
    <location>
        <begin position="18"/>
        <end position="26"/>
    </location>
</feature>
<feature type="helix" evidence="24">
    <location>
        <begin position="31"/>
        <end position="36"/>
    </location>
</feature>
<feature type="turn" evidence="24">
    <location>
        <begin position="37"/>
        <end position="39"/>
    </location>
</feature>
<feature type="helix" evidence="24">
    <location>
        <begin position="43"/>
        <end position="50"/>
    </location>
</feature>
<feature type="helix" evidence="24">
    <location>
        <begin position="55"/>
        <end position="59"/>
    </location>
</feature>
<feature type="turn" evidence="24">
    <location>
        <begin position="60"/>
        <end position="62"/>
    </location>
</feature>
<protein>
    <recommendedName>
        <fullName>DNA-directed RNA polymerases I, II, and III subunit RPABC5</fullName>
        <shortName>RNA polymerases I, II, and III subunit ABC5</shortName>
    </recommendedName>
    <alternativeName>
        <fullName>DNA-directed RNA polymerase III subunit L</fullName>
    </alternativeName>
    <alternativeName>
        <fullName>RNA polymerase II 7.6 kDa subunit</fullName>
        <shortName>RPB7.6</shortName>
    </alternativeName>
    <alternativeName>
        <fullName>RPB10 homolog</fullName>
    </alternativeName>
</protein>
<gene>
    <name evidence="19" type="primary">POLR2L</name>
</gene>
<comment type="function">
    <text evidence="1 2 3 4 5 6 11 13 14 15">DNA-dependent RNA polymerase catalyzes the transcription of DNA into RNA using the four ribonucleoside triphosphates as substrates. Common component of RNA polymerases I, II and III which synthesize ribosomal RNA precursors, mRNA precursors and many functional non-coding RNAs, and a small RNAs, such as 5S rRNA and tRNAs, respectively.</text>
</comment>
<comment type="subunit">
    <text evidence="2 5 6 7 8 9 10 11 12 13 14 15">Component of the RNA polymerase I (Pol I), RNA polymerase II (Pol II) and RNA polymerase III (Pol III) complexes consisting of at least 13, 12 and 17 subunits, respectively (PubMed:27193682, PubMed:30190596, PubMed:33335104, PubMed:33558764, PubMed:33558766, PubMed:33674783, PubMed:34675218). Pol I complex consists of a ten-subunit catalytic core composed of POLR1A/RPA1, POLR1B/RPA2, POLR1C/RPAC1, POLR1D/RPAC2, POLR1H/RPA12, POLR2E/RPABC1, POLR2F/RPABC2, POLR2H/RPABC3, POLR2K/RPABC4 and POLR2L/RPABC5; a mobile stalk subunit POLR1F/RPA43 protruding from the core and additional subunits homologous to general transcription factors POLR1E/RPA49 and POLR1G/RPA34. Part of Pol I pre-initiation complex (PIC), in which Pol I core assembles with RRN3 and promoter-bound UTBF and SL1/TIF-IB complex (PubMed:34671025, PubMed:34887565, PubMed:36271492). Pol II complex contains a ten-subunit catalytic core composed of POLR2A/RPB1, POLR2B/RPB2, POLR2C/RPB3, POLR2I/RPB9, POLR2J/RPB11, POLR2E/RPABC1, POLR2F/RPABC2, POLR2H/RPABC3, POLR2K/RPABC4 and POLR2L/RPABC5 and a mobile stalk composed of two subunits POLR2D/RPB4 and POLR2G/RPB7. Part of Pol II(G) complex, in which Pol II core associates with an additional subunit POLR2M; unlike conventional Pol II, Pol II(G) functions as a transcriptional repressor. Part of TBP-based Pol II pre-initiation complex (PIC), in which Pol II core assembles with general transcription factors and other specific initiation factors including GTF2E1, GTF2E2, GTF2F1, GTF2F2, TCEA1, ERCC2, ERCC3, GTF2H2, GTF2H3, GTF2H4, GTF2H5, GTF2A1, GTF2A2, GTF2B and TBP; this large multi-subunit PIC complex mediates DNA unwinding and targets Pol II core to the transcription start site where the first phosphodiester bond forms (PubMed:27193682, PubMed:30190596, PubMed:9852112). Pol III complex consists of a ten-subunit catalytic core composed of POLR3A/RPC1, POLR3B/RPC2, POLR1C/RPAC1, POLR1D/RPAC2, POLR3K/RPC10, POLR2E/RPABC1, POLR2F/RPABC2, POLR2H/RPABC3, POLR2K/RPABC4 and POLR2L/RPABC5; a mobile stalk composed of two subunits POLR3H/RPC8 and CRCP/RPC9, protruding from the core and functioning primarily in transcription initiation; and additional subunits homologous to general transcription factors of the RNA polymerase II machinery, POLR3C/RPC3-POLR3F/RPC6-POLR3G/RPC7 heterotrimer required for transcription initiation and POLR3D/RPC4-POLR3E/RPC5 heterodimer involved in both transcription initiation and termination (PubMed:33335104, PubMed:33558764, PubMed:33558766, PubMed:33674783, PubMed:34675218).</text>
</comment>
<comment type="interaction">
    <interactant intactId="EBI-359527">
        <id>P62875</id>
    </interactant>
    <interactant intactId="EBI-712648">
        <id>O95994</id>
        <label>AGR2</label>
    </interactant>
    <organismsDiffer>false</organismsDiffer>
    <experiments>3</experiments>
</comment>
<comment type="interaction">
    <interactant intactId="EBI-359527">
        <id>P62875</id>
    </interactant>
    <interactant intactId="EBI-744695">
        <id>Q8N9N5</id>
        <label>BANP</label>
    </interactant>
    <organismsDiffer>false</organismsDiffer>
    <experiments>3</experiments>
</comment>
<comment type="interaction">
    <interactant intactId="EBI-359527">
        <id>P62875</id>
    </interactant>
    <interactant intactId="EBI-945751">
        <id>P38432</id>
        <label>COIL</label>
    </interactant>
    <organismsDiffer>false</organismsDiffer>
    <experiments>3</experiments>
</comment>
<comment type="interaction">
    <interactant intactId="EBI-359527">
        <id>P62875</id>
    </interactant>
    <interactant intactId="EBI-19153639">
        <id>Q9NTX9</id>
        <label>FAM217B</label>
    </interactant>
    <organismsDiffer>false</organismsDiffer>
    <experiments>3</experiments>
</comment>
<comment type="interaction">
    <interactant intactId="EBI-359527">
        <id>P62875</id>
    </interactant>
    <interactant intactId="EBI-2686809">
        <id>Q96JM7</id>
        <label>L3MBTL3</label>
    </interactant>
    <organismsDiffer>false</organismsDiffer>
    <experiments>3</experiments>
</comment>
<comment type="interaction">
    <interactant intactId="EBI-359527">
        <id>P62875</id>
    </interactant>
    <interactant intactId="EBI-7950997">
        <id>Q96RE7</id>
        <label>NACC1</label>
    </interactant>
    <organismsDiffer>false</organismsDiffer>
    <experiments>3</experiments>
</comment>
<comment type="interaction">
    <interactant intactId="EBI-359527">
        <id>P62875</id>
    </interactant>
    <interactant intactId="EBI-713786">
        <id>Q8IXK0</id>
        <label>PHC2</label>
    </interactant>
    <organismsDiffer>false</organismsDiffer>
    <experiments>3</experiments>
</comment>
<comment type="interaction">
    <interactant intactId="EBI-359527">
        <id>P62875</id>
    </interactant>
    <interactant intactId="EBI-394737">
        <id>O15514</id>
        <label>POLR2D</label>
    </interactant>
    <organismsDiffer>false</organismsDiffer>
    <experiments>5</experiments>
</comment>
<comment type="interaction">
    <interactant intactId="EBI-359527">
        <id>P62875</id>
    </interactant>
    <interactant intactId="EBI-357793">
        <id>P60900</id>
        <label>PSMA6</label>
    </interactant>
    <organismsDiffer>false</organismsDiffer>
    <experiments>3</experiments>
</comment>
<comment type="interaction">
    <interactant intactId="EBI-359527">
        <id>P62875</id>
    </interactant>
    <interactant intactId="EBI-307352">
        <id>Q04864</id>
        <label>REL</label>
    </interactant>
    <organismsDiffer>false</organismsDiffer>
    <experiments>3</experiments>
</comment>
<comment type="interaction">
    <interactant intactId="EBI-359527">
        <id>P62875</id>
    </interactant>
    <interactant intactId="EBI-10829018">
        <id>Q04864-2</id>
        <label>REL</label>
    </interactant>
    <organismsDiffer>false</organismsDiffer>
    <experiments>3</experiments>
</comment>
<comment type="interaction">
    <interactant intactId="EBI-359527">
        <id>P62875</id>
    </interactant>
    <interactant intactId="EBI-1048085">
        <id>Q9BWH6</id>
        <label>RPAP1</label>
    </interactant>
    <organismsDiffer>false</organismsDiffer>
    <experiments>5</experiments>
</comment>
<comment type="interaction">
    <interactant intactId="EBI-359527">
        <id>P62875</id>
    </interactant>
    <interactant intactId="EBI-413317">
        <id>Q96R06</id>
        <label>SPAG5</label>
    </interactant>
    <organismsDiffer>false</organismsDiffer>
    <experiments>3</experiments>
</comment>
<comment type="interaction">
    <interactant intactId="EBI-359527">
        <id>P62875</id>
    </interactant>
    <interactant intactId="EBI-741515">
        <id>Q9NVV9</id>
        <label>THAP1</label>
    </interactant>
    <organismsDiffer>false</organismsDiffer>
    <experiments>3</experiments>
</comment>
<comment type="interaction">
    <interactant intactId="EBI-359527">
        <id>P62875</id>
    </interactant>
    <interactant intactId="EBI-10175039">
        <id>Q13625-3</id>
        <label>TP53BP2</label>
    </interactant>
    <organismsDiffer>false</organismsDiffer>
    <experiments>3</experiments>
</comment>
<comment type="interaction">
    <interactant intactId="EBI-359527">
        <id>P62875</id>
    </interactant>
    <interactant intactId="EBI-358993">
        <id>Q15645</id>
        <label>TRIP13</label>
    </interactant>
    <organismsDiffer>false</organismsDiffer>
    <experiments>3</experiments>
</comment>
<comment type="interaction">
    <interactant intactId="EBI-359527">
        <id>P62875</id>
    </interactant>
    <interactant intactId="EBI-10176632">
        <id>O43829</id>
        <label>ZBTB14</label>
    </interactant>
    <organismsDiffer>false</organismsDiffer>
    <experiments>3</experiments>
</comment>
<comment type="subcellular location">
    <subcellularLocation>
        <location evidence="3 7 15">Nucleus</location>
    </subcellularLocation>
    <subcellularLocation>
        <location evidence="17 18">Nucleus</location>
        <location evidence="17 18">Nucleolus</location>
    </subcellularLocation>
</comment>
<comment type="similarity">
    <text evidence="16">Belongs to the archaeal Rpo10/eukaryotic RPB10 RNA polymerase subunit family.</text>
</comment>
<reference key="1">
    <citation type="journal article" date="1995" name="Mol. Cell. Biol.">
        <title>Six human RNA polymerase subunits functionally substitute for their yeast counterparts.</title>
        <authorList>
            <person name="McKune K."/>
            <person name="Moore P.A."/>
            <person name="Hull M.W."/>
            <person name="Woychik N.A."/>
        </authorList>
    </citation>
    <scope>NUCLEOTIDE SEQUENCE [MRNA]</scope>
</reference>
<reference key="2">
    <citation type="submission" date="2004-06" db="EMBL/GenBank/DDBJ databases">
        <title>Cloning of human full open reading frames in Gateway(TM) system entry vector (pDONR201).</title>
        <authorList>
            <person name="Ebert L."/>
            <person name="Schick M."/>
            <person name="Neubert P."/>
            <person name="Schatten R."/>
            <person name="Henze S."/>
            <person name="Korn B."/>
        </authorList>
    </citation>
    <scope>NUCLEOTIDE SEQUENCE [LARGE SCALE MRNA]</scope>
</reference>
<reference key="3">
    <citation type="journal article" date="2004" name="Nat. Genet.">
        <title>Complete sequencing and characterization of 21,243 full-length human cDNAs.</title>
        <authorList>
            <person name="Ota T."/>
            <person name="Suzuki Y."/>
            <person name="Nishikawa T."/>
            <person name="Otsuki T."/>
            <person name="Sugiyama T."/>
            <person name="Irie R."/>
            <person name="Wakamatsu A."/>
            <person name="Hayashi K."/>
            <person name="Sato H."/>
            <person name="Nagai K."/>
            <person name="Kimura K."/>
            <person name="Makita H."/>
            <person name="Sekine M."/>
            <person name="Obayashi M."/>
            <person name="Nishi T."/>
            <person name="Shibahara T."/>
            <person name="Tanaka T."/>
            <person name="Ishii S."/>
            <person name="Yamamoto J."/>
            <person name="Saito K."/>
            <person name="Kawai Y."/>
            <person name="Isono Y."/>
            <person name="Nakamura Y."/>
            <person name="Nagahari K."/>
            <person name="Murakami K."/>
            <person name="Yasuda T."/>
            <person name="Iwayanagi T."/>
            <person name="Wagatsuma M."/>
            <person name="Shiratori A."/>
            <person name="Sudo H."/>
            <person name="Hosoiri T."/>
            <person name="Kaku Y."/>
            <person name="Kodaira H."/>
            <person name="Kondo H."/>
            <person name="Sugawara M."/>
            <person name="Takahashi M."/>
            <person name="Kanda K."/>
            <person name="Yokoi T."/>
            <person name="Furuya T."/>
            <person name="Kikkawa E."/>
            <person name="Omura Y."/>
            <person name="Abe K."/>
            <person name="Kamihara K."/>
            <person name="Katsuta N."/>
            <person name="Sato K."/>
            <person name="Tanikawa M."/>
            <person name="Yamazaki M."/>
            <person name="Ninomiya K."/>
            <person name="Ishibashi T."/>
            <person name="Yamashita H."/>
            <person name="Murakawa K."/>
            <person name="Fujimori K."/>
            <person name="Tanai H."/>
            <person name="Kimata M."/>
            <person name="Watanabe M."/>
            <person name="Hiraoka S."/>
            <person name="Chiba Y."/>
            <person name="Ishida S."/>
            <person name="Ono Y."/>
            <person name="Takiguchi S."/>
            <person name="Watanabe S."/>
            <person name="Yosida M."/>
            <person name="Hotuta T."/>
            <person name="Kusano J."/>
            <person name="Kanehori K."/>
            <person name="Takahashi-Fujii A."/>
            <person name="Hara H."/>
            <person name="Tanase T.-O."/>
            <person name="Nomura Y."/>
            <person name="Togiya S."/>
            <person name="Komai F."/>
            <person name="Hara R."/>
            <person name="Takeuchi K."/>
            <person name="Arita M."/>
            <person name="Imose N."/>
            <person name="Musashino K."/>
            <person name="Yuuki H."/>
            <person name="Oshima A."/>
            <person name="Sasaki N."/>
            <person name="Aotsuka S."/>
            <person name="Yoshikawa Y."/>
            <person name="Matsunawa H."/>
            <person name="Ichihara T."/>
            <person name="Shiohata N."/>
            <person name="Sano S."/>
            <person name="Moriya S."/>
            <person name="Momiyama H."/>
            <person name="Satoh N."/>
            <person name="Takami S."/>
            <person name="Terashima Y."/>
            <person name="Suzuki O."/>
            <person name="Nakagawa S."/>
            <person name="Senoh A."/>
            <person name="Mizoguchi H."/>
            <person name="Goto Y."/>
            <person name="Shimizu F."/>
            <person name="Wakebe H."/>
            <person name="Hishigaki H."/>
            <person name="Watanabe T."/>
            <person name="Sugiyama A."/>
            <person name="Takemoto M."/>
            <person name="Kawakami B."/>
            <person name="Yamazaki M."/>
            <person name="Watanabe K."/>
            <person name="Kumagai A."/>
            <person name="Itakura S."/>
            <person name="Fukuzumi Y."/>
            <person name="Fujimori Y."/>
            <person name="Komiyama M."/>
            <person name="Tashiro H."/>
            <person name="Tanigami A."/>
            <person name="Fujiwara T."/>
            <person name="Ono T."/>
            <person name="Yamada K."/>
            <person name="Fujii Y."/>
            <person name="Ozaki K."/>
            <person name="Hirao M."/>
            <person name="Ohmori Y."/>
            <person name="Kawabata A."/>
            <person name="Hikiji T."/>
            <person name="Kobatake N."/>
            <person name="Inagaki H."/>
            <person name="Ikema Y."/>
            <person name="Okamoto S."/>
            <person name="Okitani R."/>
            <person name="Kawakami T."/>
            <person name="Noguchi S."/>
            <person name="Itoh T."/>
            <person name="Shigeta K."/>
            <person name="Senba T."/>
            <person name="Matsumura K."/>
            <person name="Nakajima Y."/>
            <person name="Mizuno T."/>
            <person name="Morinaga M."/>
            <person name="Sasaki M."/>
            <person name="Togashi T."/>
            <person name="Oyama M."/>
            <person name="Hata H."/>
            <person name="Watanabe M."/>
            <person name="Komatsu T."/>
            <person name="Mizushima-Sugano J."/>
            <person name="Satoh T."/>
            <person name="Shirai Y."/>
            <person name="Takahashi Y."/>
            <person name="Nakagawa K."/>
            <person name="Okumura K."/>
            <person name="Nagase T."/>
            <person name="Nomura N."/>
            <person name="Kikuchi H."/>
            <person name="Masuho Y."/>
            <person name="Yamashita R."/>
            <person name="Nakai K."/>
            <person name="Yada T."/>
            <person name="Nakamura Y."/>
            <person name="Ohara O."/>
            <person name="Isogai T."/>
            <person name="Sugano S."/>
        </authorList>
    </citation>
    <scope>NUCLEOTIDE SEQUENCE [LARGE SCALE MRNA]</scope>
    <source>
        <tissue>Cerebellum</tissue>
    </source>
</reference>
<reference key="4">
    <citation type="journal article" date="2004" name="Genome Res.">
        <title>The status, quality, and expansion of the NIH full-length cDNA project: the Mammalian Gene Collection (MGC).</title>
        <authorList>
            <consortium name="The MGC Project Team"/>
        </authorList>
    </citation>
    <scope>NUCLEOTIDE SEQUENCE [LARGE SCALE MRNA]</scope>
    <source>
        <tissue>Bone marrow</tissue>
        <tissue>Kidney</tissue>
    </source>
</reference>
<reference key="5">
    <citation type="journal article" date="1995" name="Mol. Cell. Biol.">
        <title>Four subunits that are shared by the three classes of RNA polymerase are functionally interchangeable between Homo sapiens and Saccharomyces cerevisiae.</title>
        <authorList>
            <person name="Shpakovski G.V."/>
            <person name="Acker J."/>
            <person name="Wintzerith M."/>
            <person name="Lacroix J.F."/>
            <person name="Thuriaux P."/>
            <person name="Vigneron M."/>
        </authorList>
    </citation>
    <scope>NUCLEOTIDE SEQUENCE [GENOMIC DNA] OF 1-32</scope>
</reference>
<reference key="6">
    <citation type="journal article" date="1998" name="J. Biol. Chem.">
        <title>Immunoaffinity purification and functional characterization of human transcription factor IIH and RNA polymerase II from clonal cell lines that conditionally express epitope-tagged subunits of the multiprotein complexes.</title>
        <authorList>
            <person name="Kershnar E."/>
            <person name="Wu S.-Y."/>
            <person name="Chiang C.-M."/>
        </authorList>
    </citation>
    <scope>FUNCTION</scope>
    <scope>IDENTIFICATION IN THE RNA POLYMERASE II CORE-COMPLEX</scope>
    <scope>SUBCELLULAR LOCATION</scope>
</reference>
<reference key="7">
    <citation type="journal article" date="2006" name="Mol. Cell. Biol.">
        <title>RNA polymerase I-specific subunit CAST/hPAF49 has a role in the activation of transcription by upstream binding factor.</title>
        <authorList>
            <person name="Panov K.I."/>
            <person name="Panova T.B."/>
            <person name="Gadal O."/>
            <person name="Nishiyama K."/>
            <person name="Saito T."/>
            <person name="Russell J."/>
            <person name="Zomerdijk J.C.B.M."/>
        </authorList>
    </citation>
    <scope>IDENTIFICATION IN THE RNA POL I COMPLEX</scope>
    <scope>FUNCTION</scope>
    <scope>SUBCELLULAR LOCATION</scope>
</reference>
<reference key="8">
    <citation type="journal article" date="2010" name="Genome Res.">
        <title>Defining the RNA polymerase III transcriptome: Genome-wide localization of the RNA polymerase III transcription machinery in human cells.</title>
        <authorList>
            <person name="Canella D."/>
            <person name="Praz V."/>
            <person name="Reina J.H."/>
            <person name="Cousin P."/>
            <person name="Hernandez N."/>
        </authorList>
    </citation>
    <scope>FUNCTION OF POL III</scope>
</reference>
<reference key="9">
    <citation type="journal article" date="2011" name="BMC Syst. Biol.">
        <title>Initial characterization of the human central proteome.</title>
        <authorList>
            <person name="Burkard T.R."/>
            <person name="Planyavsky M."/>
            <person name="Kaupe I."/>
            <person name="Breitwieser F.P."/>
            <person name="Buerckstuemmer T."/>
            <person name="Bennett K.L."/>
            <person name="Superti-Furga G."/>
            <person name="Colinge J."/>
        </authorList>
    </citation>
    <scope>IDENTIFICATION BY MASS SPECTROMETRY [LARGE SCALE ANALYSIS]</scope>
</reference>
<reference key="10">
    <citation type="journal article" date="2016" name="Nature">
        <title>Near-atomic resolution visualization of human transcription promoter opening.</title>
        <authorList>
            <person name="He Y."/>
            <person name="Yan C."/>
            <person name="Fang J."/>
            <person name="Inouye C."/>
            <person name="Tjian R."/>
            <person name="Ivanov I."/>
            <person name="Nogales E."/>
        </authorList>
    </citation>
    <scope>STRUCTURE BY ELECTRON MICROSCOPY (3.90 ANGSTROMS) IN COMPLEX WITH ZN(2+)</scope>
    <scope>FUNCTION OF POL II</scope>
    <scope>SUBUNIT</scope>
</reference>
<reference key="11">
    <citation type="journal article" date="2018" name="Nat. Struct. Mol. Biol.">
        <title>Architecture of Pol II(G) and molecular mechanism of transcription regulation by Gdown1.</title>
        <authorList>
            <person name="Jishage M."/>
            <person name="Yu X."/>
            <person name="Shi Y."/>
            <person name="Ganesan S.J."/>
            <person name="Chen W.Y."/>
            <person name="Sali A."/>
            <person name="Chait B.T."/>
            <person name="Asturias F.J."/>
            <person name="Roeder R.G."/>
        </authorList>
    </citation>
    <scope>STRUCTURE BY ELECTRON MICROSCOPY (3.90 ANGSTROMS)</scope>
    <scope>FUNCTION OF POL II</scope>
    <scope>SUBUNIT</scope>
</reference>
<reference key="12">
    <citation type="journal article" date="2020" name="Nat. Commun.">
        <title>Structure of human RNA polymerase III.</title>
        <authorList>
            <person name="Ramsay E.P."/>
            <person name="Abascal-Palacios G."/>
            <person name="Daiss J.L."/>
            <person name="King H."/>
            <person name="Gouge J."/>
            <person name="Pilsl M."/>
            <person name="Beuron F."/>
            <person name="Morris E."/>
            <person name="Gunkel P."/>
            <person name="Engel C."/>
            <person name="Vannini A."/>
        </authorList>
    </citation>
    <scope>STRUCTURE BY ELECTRON MICROSCOPY (4.00 ANGSTROMS)</scope>
    <scope>SUBUNIT</scope>
    <scope>SUBCELLULAR LOCATION</scope>
</reference>
<reference key="13">
    <citation type="journal article" date="2021" name="Cell Discov.">
        <title>Structure of the human RNA polymerase I elongation complex.</title>
        <authorList>
            <person name="Zhao D."/>
            <person name="Liu W."/>
            <person name="Chen K."/>
            <person name="Wu Z."/>
            <person name="Yang H."/>
            <person name="Xu Y."/>
        </authorList>
    </citation>
    <scope>STRUCTURE BY ELECTRON MICROSCOPY (2.81 ANGSTROMS)</scope>
    <scope>FUNCTION OF POL I</scope>
    <scope>SUBUNIT</scope>
</reference>
<reference key="14">
    <citation type="journal article" date="2021" name="Cell Res.">
        <title>Structure of human RNA polymerase III elongation complex.</title>
        <authorList>
            <person name="Li L."/>
            <person name="Yu Z."/>
            <person name="Zhao D."/>
            <person name="Ren Y."/>
            <person name="Hou H."/>
            <person name="Xu Y."/>
        </authorList>
    </citation>
    <scope>STRUCTURE BY ELECTRON MICROSCOPY (3.35 ANGSTROMS) IN COMPLEX WITH ZN(2+)</scope>
    <scope>SUBUNIT</scope>
</reference>
<reference key="15">
    <citation type="journal article" date="2021" name="Nat. Commun.">
        <title>Structural insights into RNA polymerase III-mediated transcription termination through trapping poly-deoxythymidine.</title>
        <authorList>
            <person name="Hou H."/>
            <person name="Li Y."/>
            <person name="Wang M."/>
            <person name="Liu A."/>
            <person name="Yu Z."/>
            <person name="Chen K."/>
            <person name="Zhao D."/>
            <person name="Xu Y."/>
        </authorList>
    </citation>
    <scope>STRUCTURE BY ELECTRON MICROSCOPY (3.60 ANGSTROMS)</scope>
    <scope>SUBUNIT</scope>
</reference>
<reference key="16">
    <citation type="journal article" date="2021" name="Nat. Struct. Mol. Biol.">
        <title>Cryo-EM structures of human RNA polymerase III in its unbound and transcribing states.</title>
        <authorList>
            <person name="Girbig M."/>
            <person name="Misiaszek A.D."/>
            <person name="Vorlander M.K."/>
            <person name="Lafita A."/>
            <person name="Grotsch H."/>
            <person name="Baudin F."/>
            <person name="Bateman A."/>
            <person name="Muller C.W."/>
        </authorList>
    </citation>
    <scope>STRUCTURE BY ELECTRON MICROSCOPY (2.80 ANGSTROMS) IN COMPLEX WITH ZN(2+)</scope>
    <scope>SUBUNIT</scope>
</reference>
<reference key="17">
    <citation type="journal article" date="2021" name="Nat. Struct. Mol. Biol.">
        <title>Cryo-EM structures of human RNA polymerase I.</title>
        <authorList>
            <person name="Misiaszek A.D."/>
            <person name="Girbig M."/>
            <person name="Grotsch H."/>
            <person name="Baudin F."/>
            <person name="Murciano B."/>
            <person name="Lafita A."/>
            <person name="Muller C.W."/>
        </authorList>
    </citation>
    <scope>STRUCTURE BY ELECTRON MICROSCOPY (2.70 ANGSTROMS)</scope>
    <scope>FUNCTION OF POL I</scope>
    <scope>SUBUNIT</scope>
    <scope>SUBCELLULAR LOCATION</scope>
</reference>
<reference key="18">
    <citation type="journal article" date="2021" name="Nat. Struct. Mol. Biol.">
        <title>Structural insights into transcriptional regulation of human RNA polymerase III.</title>
        <authorList>
            <person name="Wang Q."/>
            <person name="Li S."/>
            <person name="Wan F."/>
            <person name="Xu Y."/>
            <person name="Wu Z."/>
            <person name="Cao M."/>
            <person name="Lan P."/>
            <person name="Lei M."/>
            <person name="Wu J."/>
        </authorList>
    </citation>
    <scope>STRUCTURE BY ELECTRON MICROSCOPY (2.90 ANGSTROMS) IN COMPLEX WITH ZN(2+)</scope>
    <scope>SUBUNIT</scope>
</reference>
<reference key="19">
    <citation type="journal article" date="2022" name="Life. Sci Alliance">
        <title>The human RNA polymerase I structure reveals an HMG-like docking domain specific to metazoans.</title>
        <authorList>
            <person name="Daiss J.L."/>
            <person name="Pilsl M."/>
            <person name="Straub K."/>
            <person name="Bleckmann A."/>
            <person name="Hocherl M."/>
            <person name="Heiss F.B."/>
            <person name="Abascal-Palacios G."/>
            <person name="Ramsay E.P."/>
            <person name="Tluckova K."/>
            <person name="Mars J.C."/>
            <person name="Furtges T."/>
            <person name="Bruckmann A."/>
            <person name="Rudack T."/>
            <person name="Bernecky C."/>
            <person name="Lamour V."/>
            <person name="Panov K."/>
            <person name="Vannini A."/>
            <person name="Moss T."/>
            <person name="Engel C."/>
        </authorList>
    </citation>
    <scope>STRUCTURE BY ELECTRON MICROSCOPY (4.09 ANGSTROMS)</scope>
    <scope>FUNCTION OF POL I</scope>
    <scope>SUBUNIT</scope>
    <scope>SUBCELLULAR LOCATION</scope>
</reference>
<organism>
    <name type="scientific">Homo sapiens</name>
    <name type="common">Human</name>
    <dbReference type="NCBI Taxonomy" id="9606"/>
    <lineage>
        <taxon>Eukaryota</taxon>
        <taxon>Metazoa</taxon>
        <taxon>Chordata</taxon>
        <taxon>Craniata</taxon>
        <taxon>Vertebrata</taxon>
        <taxon>Euteleostomi</taxon>
        <taxon>Mammalia</taxon>
        <taxon>Eutheria</taxon>
        <taxon>Euarchontoglires</taxon>
        <taxon>Primates</taxon>
        <taxon>Haplorrhini</taxon>
        <taxon>Catarrhini</taxon>
        <taxon>Hominidae</taxon>
        <taxon>Homo</taxon>
    </lineage>
</organism>
<keyword id="KW-0002">3D-structure</keyword>
<keyword id="KW-0240">DNA-directed RNA polymerase</keyword>
<keyword id="KW-0479">Metal-binding</keyword>
<keyword id="KW-0539">Nucleus</keyword>
<keyword id="KW-1267">Proteomics identification</keyword>
<keyword id="KW-1185">Reference proteome</keyword>
<keyword id="KW-0804">Transcription</keyword>
<keyword id="KW-0862">Zinc</keyword>